<accession>B0UTT1</accession>
<proteinExistence type="inferred from homology"/>
<gene>
    <name type="ordered locus">HSM_1206</name>
</gene>
<reference key="1">
    <citation type="submission" date="2008-02" db="EMBL/GenBank/DDBJ databases">
        <title>Complete sequence of Haemophilus somnus 2336.</title>
        <authorList>
            <consortium name="US DOE Joint Genome Institute"/>
            <person name="Siddaramappa S."/>
            <person name="Duncan A.J."/>
            <person name="Challacombe J.F."/>
            <person name="Rainey D."/>
            <person name="Gillaspy A.F."/>
            <person name="Carson M."/>
            <person name="Gipson J."/>
            <person name="Gipson M."/>
            <person name="Bruce D."/>
            <person name="Detter J.C."/>
            <person name="Han C.S."/>
            <person name="Land M."/>
            <person name="Tapia R."/>
            <person name="Thompson L.S."/>
            <person name="Orvis J."/>
            <person name="Zaitshik J."/>
            <person name="Barnes G."/>
            <person name="Brettin T.S."/>
            <person name="Dyer D.W."/>
            <person name="Inzana T.J."/>
        </authorList>
    </citation>
    <scope>NUCLEOTIDE SEQUENCE [LARGE SCALE GENOMIC DNA]</scope>
    <source>
        <strain>2336</strain>
    </source>
</reference>
<sequence>MIQSKRQQGASFEYQARLFLERQGLTFIAANQRFNCGELDLIMQDQQTIVFVEVRQRKNQIFGSAIDSVDWKKQQKWLDAANLWLAQYDSSLEDADCRFDLVAFGATTNDIQWIPNFLDE</sequence>
<evidence type="ECO:0000255" key="1">
    <source>
        <dbReference type="HAMAP-Rule" id="MF_00048"/>
    </source>
</evidence>
<comment type="similarity">
    <text evidence="1">Belongs to the UPF0102 family.</text>
</comment>
<name>Y1206_HISS2</name>
<protein>
    <recommendedName>
        <fullName evidence="1">UPF0102 protein HSM_1206</fullName>
    </recommendedName>
</protein>
<dbReference type="EMBL" id="CP000947">
    <property type="protein sequence ID" value="ACA30930.1"/>
    <property type="molecule type" value="Genomic_DNA"/>
</dbReference>
<dbReference type="RefSeq" id="WP_012340382.1">
    <property type="nucleotide sequence ID" value="NC_010519.1"/>
</dbReference>
<dbReference type="SMR" id="B0UTT1"/>
<dbReference type="STRING" id="228400.HSM_1206"/>
<dbReference type="GeneID" id="31487509"/>
<dbReference type="KEGG" id="hsm:HSM_1206"/>
<dbReference type="HOGENOM" id="CLU_115353_1_0_6"/>
<dbReference type="GO" id="GO:0003676">
    <property type="term" value="F:nucleic acid binding"/>
    <property type="evidence" value="ECO:0007669"/>
    <property type="project" value="InterPro"/>
</dbReference>
<dbReference type="Gene3D" id="3.40.1350.10">
    <property type="match status" value="1"/>
</dbReference>
<dbReference type="HAMAP" id="MF_00048">
    <property type="entry name" value="UPF0102"/>
    <property type="match status" value="1"/>
</dbReference>
<dbReference type="InterPro" id="IPR011335">
    <property type="entry name" value="Restrct_endonuc-II-like"/>
</dbReference>
<dbReference type="InterPro" id="IPR011856">
    <property type="entry name" value="tRNA_endonuc-like_dom_sf"/>
</dbReference>
<dbReference type="InterPro" id="IPR003509">
    <property type="entry name" value="UPF0102_YraN-like"/>
</dbReference>
<dbReference type="NCBIfam" id="NF009150">
    <property type="entry name" value="PRK12497.1-3"/>
    <property type="match status" value="1"/>
</dbReference>
<dbReference type="NCBIfam" id="TIGR00252">
    <property type="entry name" value="YraN family protein"/>
    <property type="match status" value="1"/>
</dbReference>
<dbReference type="PANTHER" id="PTHR34039">
    <property type="entry name" value="UPF0102 PROTEIN YRAN"/>
    <property type="match status" value="1"/>
</dbReference>
<dbReference type="PANTHER" id="PTHR34039:SF1">
    <property type="entry name" value="UPF0102 PROTEIN YRAN"/>
    <property type="match status" value="1"/>
</dbReference>
<dbReference type="Pfam" id="PF02021">
    <property type="entry name" value="UPF0102"/>
    <property type="match status" value="1"/>
</dbReference>
<dbReference type="SUPFAM" id="SSF52980">
    <property type="entry name" value="Restriction endonuclease-like"/>
    <property type="match status" value="1"/>
</dbReference>
<feature type="chain" id="PRO_1000091243" description="UPF0102 protein HSM_1206">
    <location>
        <begin position="1"/>
        <end position="120"/>
    </location>
</feature>
<organism>
    <name type="scientific">Histophilus somni (strain 2336)</name>
    <name type="common">Haemophilus somnus</name>
    <dbReference type="NCBI Taxonomy" id="228400"/>
    <lineage>
        <taxon>Bacteria</taxon>
        <taxon>Pseudomonadati</taxon>
        <taxon>Pseudomonadota</taxon>
        <taxon>Gammaproteobacteria</taxon>
        <taxon>Pasteurellales</taxon>
        <taxon>Pasteurellaceae</taxon>
        <taxon>Histophilus</taxon>
    </lineage>
</organism>